<organism>
    <name type="scientific">Salmonella phage IKe</name>
    <name type="common">Bacteriophage IKe</name>
    <dbReference type="NCBI Taxonomy" id="10867"/>
    <lineage>
        <taxon>Viruses</taxon>
        <taxon>Monodnaviria</taxon>
        <taxon>Loebvirae</taxon>
        <taxon>Hofneiviricota</taxon>
        <taxon>Faserviricetes</taxon>
        <taxon>Tubulavirales</taxon>
        <taxon>Inoviridae</taxon>
        <taxon>Lineavirus</taxon>
        <taxon>Lineavirus IKe</taxon>
    </lineage>
</organism>
<comment type="function">
    <text evidence="1">May initiate with G7P the virion concomitant assembly-budding process, by interacting with the packaging signal of the viral genome. The assembly-budding takes place at the host inner membrane. In turn, G7P and G9P are present at the end of the filamentous virion that emerges first from the bacterial host (By similarity).</text>
</comment>
<comment type="subcellular location">
    <subcellularLocation>
        <location evidence="3">Virion</location>
    </subcellularLocation>
    <subcellularLocation>
        <location evidence="3">Host membrane</location>
        <topology evidence="3">Single-pass membrane protein</topology>
    </subcellularLocation>
    <text evidence="1">Prior to assembly, is found associated with the bacterial host inner membrane. There are about five copies of this protein per mature phage that are located on the tail side of the filamentous virion with G7P (By similarity).</text>
</comment>
<comment type="similarity">
    <text evidence="3">Belongs to the inovirus G9P protein family.</text>
</comment>
<name>G9P_BPIKE</name>
<dbReference type="EMBL" id="X02139">
    <property type="protein sequence ID" value="CAA26071.1"/>
    <property type="molecule type" value="Genomic_DNA"/>
</dbReference>
<dbReference type="PIR" id="A04280">
    <property type="entry name" value="Z9BPIK"/>
</dbReference>
<dbReference type="RefSeq" id="NP_040574.1">
    <property type="nucleotide sequence ID" value="NC_002014.1"/>
</dbReference>
<dbReference type="SMR" id="P03678"/>
<dbReference type="GeneID" id="1260886"/>
<dbReference type="KEGG" id="vg:1260886"/>
<dbReference type="Proteomes" id="UP000000372">
    <property type="component" value="Genome"/>
</dbReference>
<dbReference type="GO" id="GO:0033644">
    <property type="term" value="C:host cell membrane"/>
    <property type="evidence" value="ECO:0007669"/>
    <property type="project" value="UniProtKB-SubCell"/>
</dbReference>
<dbReference type="GO" id="GO:0016020">
    <property type="term" value="C:membrane"/>
    <property type="evidence" value="ECO:0007669"/>
    <property type="project" value="UniProtKB-KW"/>
</dbReference>
<dbReference type="GO" id="GO:0044423">
    <property type="term" value="C:virion component"/>
    <property type="evidence" value="ECO:0007669"/>
    <property type="project" value="UniProtKB-KW"/>
</dbReference>
<proteinExistence type="inferred from homology"/>
<protein>
    <recommendedName>
        <fullName>Tail virion protein G9P</fullName>
    </recommendedName>
    <alternativeName>
        <fullName>Coat protein C, polypeptide II</fullName>
    </alternativeName>
    <alternativeName>
        <fullName>G9P</fullName>
    </alternativeName>
</protein>
<gene>
    <name type="primary">IX</name>
</gene>
<reference key="1">
    <citation type="journal article" date="1985" name="J. Mol. Biol.">
        <title>Nucleotide sequence and genetic organization of the genome of the N-specific filamentous bacteriophage IKe. Comparison with the genome of the F-specific filamentous phages M13, fd and f1.</title>
        <authorList>
            <person name="Peeters B.P.H."/>
            <person name="Peters R.M."/>
            <person name="Schoenmakers J.G.G."/>
            <person name="Konings R.N.H."/>
        </authorList>
    </citation>
    <scope>NUCLEOTIDE SEQUENCE [GENOMIC DNA]</scope>
</reference>
<evidence type="ECO:0000250" key="1"/>
<evidence type="ECO:0000255" key="2"/>
<evidence type="ECO:0000305" key="3"/>
<accession>P03678</accession>
<organismHost>
    <name type="scientific">Escherichia coli</name>
    <dbReference type="NCBI Taxonomy" id="562"/>
</organismHost>
<keyword id="KW-1043">Host membrane</keyword>
<keyword id="KW-0472">Membrane</keyword>
<keyword id="KW-1185">Reference proteome</keyword>
<keyword id="KW-0812">Transmembrane</keyword>
<keyword id="KW-1133">Transmembrane helix</keyword>
<keyword id="KW-0946">Virion</keyword>
<sequence>MIDYVGSFLGAYFLGFALFYGIGFFKSISNRII</sequence>
<feature type="chain" id="PRO_0000098186" description="Tail virion protein G9P">
    <location>
        <begin position="1"/>
        <end position="33"/>
    </location>
</feature>
<feature type="transmembrane region" description="Helical" evidence="2">
    <location>
        <begin position="5"/>
        <end position="25"/>
    </location>
</feature>